<sequence>MNFKYIVAVSFLIASAYARSVKNDEQSLSQRDVLDEESLREFRGIGGALLSAGKSALKGLAKGLAEHFASGKRTAEDHEVMKRLEAVMRDLDSLDYPEEATERETRGFNQEEIANLFTKKEKRILGPVLGLVGNALGGLIKKIG</sequence>
<organism>
    <name type="scientific">Bombina maxima</name>
    <name type="common">Giant fire-bellied toad</name>
    <name type="synonym">Chinese red belly toad</name>
    <dbReference type="NCBI Taxonomy" id="161274"/>
    <lineage>
        <taxon>Eukaryota</taxon>
        <taxon>Metazoa</taxon>
        <taxon>Chordata</taxon>
        <taxon>Craniata</taxon>
        <taxon>Vertebrata</taxon>
        <taxon>Euteleostomi</taxon>
        <taxon>Amphibia</taxon>
        <taxon>Batrachia</taxon>
        <taxon>Anura</taxon>
        <taxon>Bombinatoridae</taxon>
        <taxon>Bombina</taxon>
    </lineage>
</organism>
<feature type="signal peptide" evidence="2">
    <location>
        <begin position="1"/>
        <end position="18"/>
    </location>
</feature>
<feature type="propeptide" id="PRO_0000003220" evidence="1">
    <location>
        <begin position="19"/>
        <end position="43"/>
    </location>
</feature>
<feature type="peptide" id="PRO_0000003221" description="Maximin-10">
    <location>
        <begin position="44"/>
        <end position="70"/>
    </location>
</feature>
<feature type="propeptide" id="PRO_0000003222" evidence="3">
    <location>
        <begin position="74"/>
        <end position="123"/>
    </location>
</feature>
<feature type="peptide" id="PRO_0000003223" description="Maximin-H3">
    <location>
        <begin position="124"/>
        <end position="143"/>
    </location>
</feature>
<feature type="modified residue" description="Serine amide" evidence="4">
    <location>
        <position position="70"/>
    </location>
</feature>
<feature type="modified residue" description="Isoleucine amide" evidence="3 4">
    <location>
        <position position="143"/>
    </location>
</feature>
<evidence type="ECO:0000250" key="1"/>
<evidence type="ECO:0000255" key="2"/>
<evidence type="ECO:0000269" key="3">
    <source>
    </source>
</evidence>
<evidence type="ECO:0000269" key="4">
    <source>
    </source>
</evidence>
<evidence type="ECO:0000305" key="5"/>
<comment type="function">
    <text evidence="1">Maximin-10 shows antimicrobial activity against bacteria and against the fungus C.albicans. It has little hemolytic activity (By similarity).</text>
</comment>
<comment type="function">
    <text evidence="3">Maximin-H3 shows antibacterial activity against both Gram-positive and Gram-negative bacteria. It also shows antimicrobial activity against the fungus C.albicans. Shows strong hemolytic activity.</text>
</comment>
<comment type="subcellular location">
    <subcellularLocation>
        <location>Secreted</location>
    </subcellularLocation>
</comment>
<comment type="tissue specificity">
    <text>Expressed by the skin glands.</text>
</comment>
<comment type="mass spectrometry">
    <molecule>Maximin-H3</molecule>
</comment>
<comment type="similarity">
    <text evidence="5">Belongs to the bombinin family.</text>
</comment>
<keyword id="KW-0027">Amidation</keyword>
<keyword id="KW-0878">Amphibian defense peptide</keyword>
<keyword id="KW-0044">Antibiotic</keyword>
<keyword id="KW-0929">Antimicrobial</keyword>
<keyword id="KW-0165">Cleavage on pair of basic residues</keyword>
<keyword id="KW-0204">Cytolysis</keyword>
<keyword id="KW-0903">Direct protein sequencing</keyword>
<keyword id="KW-0295">Fungicide</keyword>
<keyword id="KW-0354">Hemolysis</keyword>
<keyword id="KW-0964">Secreted</keyword>
<keyword id="KW-0732">Signal</keyword>
<accession>Q58T45</accession>
<reference key="1">
    <citation type="journal article" date="2005" name="Eur. J. Immunol.">
        <title>Variety of antimicrobial peptides in the Bombina maxima toad and evidence of their rapid diversification.</title>
        <authorList>
            <person name="Lee W.-H."/>
            <person name="Li Y."/>
            <person name="Lai R."/>
            <person name="Li S."/>
            <person name="Zhang Y."/>
            <person name="Wang W."/>
        </authorList>
    </citation>
    <scope>NUCLEOTIDE SEQUENCE [MRNA]</scope>
    <scope>PROTEIN SEQUENCE OF 44-70 AND 124-143</scope>
    <scope>AMIDATION AT SER-70 AND ILE-143</scope>
    <scope>MASS SPECTROMETRY</scope>
    <source>
        <tissue>Skin</tissue>
    </source>
</reference>
<reference key="2">
    <citation type="journal article" date="2002" name="Peptides">
        <title>Antimicrobial peptides from skin secretions of Chinese red belly toad Bombina maxima.</title>
        <authorList>
            <person name="Lai R."/>
            <person name="Zheng Y.-T."/>
            <person name="Shen J.-H."/>
            <person name="Liu G.-J."/>
            <person name="Liu H."/>
            <person name="Lee W.-H."/>
            <person name="Tang S.-Z."/>
            <person name="Zhang Y."/>
        </authorList>
    </citation>
    <scope>PROTEIN SEQUENCE OF 124-143</scope>
    <scope>AMIDATION AT ILE-143</scope>
    <scope>FUNCTION OF MAXIMIN-H3</scope>
    <scope>MASS SPECTROMETRY</scope>
</reference>
<name>M10H3_BOMMX</name>
<protein>
    <recommendedName>
        <fullName>Maximins 10/H3</fullName>
    </recommendedName>
    <component>
        <recommendedName>
            <fullName>Maximin-10</fullName>
        </recommendedName>
    </component>
    <component>
        <recommendedName>
            <fullName>Maximin-H3</fullName>
        </recommendedName>
    </component>
</protein>
<proteinExistence type="evidence at protein level"/>
<dbReference type="EMBL" id="AY849015">
    <property type="protein sequence ID" value="AAX50236.1"/>
    <property type="molecule type" value="mRNA"/>
</dbReference>
<dbReference type="SMR" id="Q58T45"/>
<dbReference type="GO" id="GO:0005576">
    <property type="term" value="C:extracellular region"/>
    <property type="evidence" value="ECO:0007669"/>
    <property type="project" value="UniProtKB-SubCell"/>
</dbReference>
<dbReference type="GO" id="GO:0042742">
    <property type="term" value="P:defense response to bacterium"/>
    <property type="evidence" value="ECO:0007669"/>
    <property type="project" value="UniProtKB-KW"/>
</dbReference>
<dbReference type="GO" id="GO:0050832">
    <property type="term" value="P:defense response to fungus"/>
    <property type="evidence" value="ECO:0007669"/>
    <property type="project" value="UniProtKB-KW"/>
</dbReference>
<dbReference type="GO" id="GO:0031640">
    <property type="term" value="P:killing of cells of another organism"/>
    <property type="evidence" value="ECO:0007669"/>
    <property type="project" value="UniProtKB-KW"/>
</dbReference>
<dbReference type="InterPro" id="IPR007962">
    <property type="entry name" value="Bombinin"/>
</dbReference>
<dbReference type="Pfam" id="PF05298">
    <property type="entry name" value="Bombinin"/>
    <property type="match status" value="1"/>
</dbReference>